<protein>
    <recommendedName>
        <fullName evidence="1">Glutamate--tRNA ligase</fullName>
        <ecNumber evidence="1">6.1.1.17</ecNumber>
    </recommendedName>
    <alternativeName>
        <fullName evidence="1">Glutamyl-tRNA synthetase</fullName>
        <shortName evidence="1">GluRS</shortName>
    </alternativeName>
</protein>
<organism>
    <name type="scientific">Streptococcus sanguinis (strain SK36)</name>
    <dbReference type="NCBI Taxonomy" id="388919"/>
    <lineage>
        <taxon>Bacteria</taxon>
        <taxon>Bacillati</taxon>
        <taxon>Bacillota</taxon>
        <taxon>Bacilli</taxon>
        <taxon>Lactobacillales</taxon>
        <taxon>Streptococcaceae</taxon>
        <taxon>Streptococcus</taxon>
    </lineage>
</organism>
<comment type="function">
    <text evidence="1">Catalyzes the attachment of glutamate to tRNA(Glu) in a two-step reaction: glutamate is first activated by ATP to form Glu-AMP and then transferred to the acceptor end of tRNA(Glu).</text>
</comment>
<comment type="catalytic activity">
    <reaction evidence="1">
        <text>tRNA(Glu) + L-glutamate + ATP = L-glutamyl-tRNA(Glu) + AMP + diphosphate</text>
        <dbReference type="Rhea" id="RHEA:23540"/>
        <dbReference type="Rhea" id="RHEA-COMP:9663"/>
        <dbReference type="Rhea" id="RHEA-COMP:9680"/>
        <dbReference type="ChEBI" id="CHEBI:29985"/>
        <dbReference type="ChEBI" id="CHEBI:30616"/>
        <dbReference type="ChEBI" id="CHEBI:33019"/>
        <dbReference type="ChEBI" id="CHEBI:78442"/>
        <dbReference type="ChEBI" id="CHEBI:78520"/>
        <dbReference type="ChEBI" id="CHEBI:456215"/>
        <dbReference type="EC" id="6.1.1.17"/>
    </reaction>
</comment>
<comment type="subunit">
    <text evidence="1">Monomer.</text>
</comment>
<comment type="subcellular location">
    <subcellularLocation>
        <location evidence="1">Cytoplasm</location>
    </subcellularLocation>
</comment>
<comment type="similarity">
    <text evidence="1">Belongs to the class-I aminoacyl-tRNA synthetase family. Glutamate--tRNA ligase type 1 subfamily.</text>
</comment>
<gene>
    <name evidence="1" type="primary">gltX</name>
    <name type="ordered locus">SSA_2144</name>
</gene>
<evidence type="ECO:0000255" key="1">
    <source>
        <dbReference type="HAMAP-Rule" id="MF_00022"/>
    </source>
</evidence>
<dbReference type="EC" id="6.1.1.17" evidence="1"/>
<dbReference type="EMBL" id="CP000387">
    <property type="protein sequence ID" value="ABN45511.1"/>
    <property type="molecule type" value="Genomic_DNA"/>
</dbReference>
<dbReference type="RefSeq" id="WP_011837577.1">
    <property type="nucleotide sequence ID" value="NC_009009.1"/>
</dbReference>
<dbReference type="RefSeq" id="YP_001036061.1">
    <property type="nucleotide sequence ID" value="NC_009009.1"/>
</dbReference>
<dbReference type="SMR" id="A3CQQ6"/>
<dbReference type="STRING" id="388919.SSA_2144"/>
<dbReference type="KEGG" id="ssa:SSA_2144"/>
<dbReference type="PATRIC" id="fig|388919.9.peg.2030"/>
<dbReference type="eggNOG" id="COG0008">
    <property type="taxonomic scope" value="Bacteria"/>
</dbReference>
<dbReference type="HOGENOM" id="CLU_015768_6_1_9"/>
<dbReference type="OrthoDB" id="9807503at2"/>
<dbReference type="Proteomes" id="UP000002148">
    <property type="component" value="Chromosome"/>
</dbReference>
<dbReference type="GO" id="GO:0005829">
    <property type="term" value="C:cytosol"/>
    <property type="evidence" value="ECO:0007669"/>
    <property type="project" value="TreeGrafter"/>
</dbReference>
<dbReference type="GO" id="GO:0005524">
    <property type="term" value="F:ATP binding"/>
    <property type="evidence" value="ECO:0007669"/>
    <property type="project" value="UniProtKB-UniRule"/>
</dbReference>
<dbReference type="GO" id="GO:0004818">
    <property type="term" value="F:glutamate-tRNA ligase activity"/>
    <property type="evidence" value="ECO:0007669"/>
    <property type="project" value="UniProtKB-UniRule"/>
</dbReference>
<dbReference type="GO" id="GO:0000049">
    <property type="term" value="F:tRNA binding"/>
    <property type="evidence" value="ECO:0007669"/>
    <property type="project" value="InterPro"/>
</dbReference>
<dbReference type="GO" id="GO:0008270">
    <property type="term" value="F:zinc ion binding"/>
    <property type="evidence" value="ECO:0007669"/>
    <property type="project" value="InterPro"/>
</dbReference>
<dbReference type="GO" id="GO:0006424">
    <property type="term" value="P:glutamyl-tRNA aminoacylation"/>
    <property type="evidence" value="ECO:0007669"/>
    <property type="project" value="UniProtKB-UniRule"/>
</dbReference>
<dbReference type="CDD" id="cd00808">
    <property type="entry name" value="GluRS_core"/>
    <property type="match status" value="1"/>
</dbReference>
<dbReference type="FunFam" id="1.10.10.350:FF:000002">
    <property type="entry name" value="Glutamate--tRNA ligase"/>
    <property type="match status" value="1"/>
</dbReference>
<dbReference type="FunFam" id="3.40.50.620:FF:000007">
    <property type="entry name" value="Glutamate--tRNA ligase"/>
    <property type="match status" value="1"/>
</dbReference>
<dbReference type="Gene3D" id="1.10.10.350">
    <property type="match status" value="1"/>
</dbReference>
<dbReference type="Gene3D" id="3.40.50.620">
    <property type="entry name" value="HUPs"/>
    <property type="match status" value="1"/>
</dbReference>
<dbReference type="HAMAP" id="MF_00022">
    <property type="entry name" value="Glu_tRNA_synth_type1"/>
    <property type="match status" value="1"/>
</dbReference>
<dbReference type="InterPro" id="IPR045462">
    <property type="entry name" value="aa-tRNA-synth_I_cd-bd"/>
</dbReference>
<dbReference type="InterPro" id="IPR020751">
    <property type="entry name" value="aa-tRNA-synth_I_codon-bd_sub2"/>
</dbReference>
<dbReference type="InterPro" id="IPR001412">
    <property type="entry name" value="aa-tRNA-synth_I_CS"/>
</dbReference>
<dbReference type="InterPro" id="IPR008925">
    <property type="entry name" value="aa_tRNA-synth_I_cd-bd_sf"/>
</dbReference>
<dbReference type="InterPro" id="IPR004527">
    <property type="entry name" value="Glu-tRNA-ligase_bac/mito"/>
</dbReference>
<dbReference type="InterPro" id="IPR000924">
    <property type="entry name" value="Glu/Gln-tRNA-synth"/>
</dbReference>
<dbReference type="InterPro" id="IPR020058">
    <property type="entry name" value="Glu/Gln-tRNA-synth_Ib_cat-dom"/>
</dbReference>
<dbReference type="InterPro" id="IPR049940">
    <property type="entry name" value="GluQ/Sye"/>
</dbReference>
<dbReference type="InterPro" id="IPR033910">
    <property type="entry name" value="GluRS_core"/>
</dbReference>
<dbReference type="InterPro" id="IPR014729">
    <property type="entry name" value="Rossmann-like_a/b/a_fold"/>
</dbReference>
<dbReference type="NCBIfam" id="TIGR00464">
    <property type="entry name" value="gltX_bact"/>
    <property type="match status" value="1"/>
</dbReference>
<dbReference type="PANTHER" id="PTHR43311">
    <property type="entry name" value="GLUTAMATE--TRNA LIGASE"/>
    <property type="match status" value="1"/>
</dbReference>
<dbReference type="PANTHER" id="PTHR43311:SF2">
    <property type="entry name" value="GLUTAMATE--TRNA LIGASE, MITOCHONDRIAL-RELATED"/>
    <property type="match status" value="1"/>
</dbReference>
<dbReference type="Pfam" id="PF19269">
    <property type="entry name" value="Anticodon_2"/>
    <property type="match status" value="1"/>
</dbReference>
<dbReference type="Pfam" id="PF00749">
    <property type="entry name" value="tRNA-synt_1c"/>
    <property type="match status" value="1"/>
</dbReference>
<dbReference type="PRINTS" id="PR00987">
    <property type="entry name" value="TRNASYNTHGLU"/>
</dbReference>
<dbReference type="SUPFAM" id="SSF48163">
    <property type="entry name" value="An anticodon-binding domain of class I aminoacyl-tRNA synthetases"/>
    <property type="match status" value="1"/>
</dbReference>
<dbReference type="SUPFAM" id="SSF52374">
    <property type="entry name" value="Nucleotidylyl transferase"/>
    <property type="match status" value="1"/>
</dbReference>
<dbReference type="PROSITE" id="PS00178">
    <property type="entry name" value="AA_TRNA_LIGASE_I"/>
    <property type="match status" value="1"/>
</dbReference>
<proteinExistence type="inferred from homology"/>
<feature type="chain" id="PRO_1000001975" description="Glutamate--tRNA ligase">
    <location>
        <begin position="1"/>
        <end position="485"/>
    </location>
</feature>
<feature type="short sequence motif" description="'HIGH' region" evidence="1">
    <location>
        <begin position="11"/>
        <end position="21"/>
    </location>
</feature>
<feature type="short sequence motif" description="'KMSKS' region" evidence="1">
    <location>
        <begin position="255"/>
        <end position="259"/>
    </location>
</feature>
<feature type="binding site" evidence="1">
    <location>
        <position position="258"/>
    </location>
    <ligand>
        <name>ATP</name>
        <dbReference type="ChEBI" id="CHEBI:30616"/>
    </ligand>
</feature>
<name>SYE_STRSV</name>
<reference key="1">
    <citation type="journal article" date="2007" name="J. Bacteriol.">
        <title>Genome of the opportunistic pathogen Streptococcus sanguinis.</title>
        <authorList>
            <person name="Xu P."/>
            <person name="Alves J.M."/>
            <person name="Kitten T."/>
            <person name="Brown A."/>
            <person name="Chen Z."/>
            <person name="Ozaki L.S."/>
            <person name="Manque P."/>
            <person name="Ge X."/>
            <person name="Serrano M.G."/>
            <person name="Puiu D."/>
            <person name="Hendricks S."/>
            <person name="Wang Y."/>
            <person name="Chaplin M.D."/>
            <person name="Akan D."/>
            <person name="Paik S."/>
            <person name="Peterson D.L."/>
            <person name="Macrina F.L."/>
            <person name="Buck G.A."/>
        </authorList>
    </citation>
    <scope>NUCLEOTIDE SEQUENCE [LARGE SCALE GENOMIC DNA]</scope>
    <source>
        <strain>SK36</strain>
    </source>
</reference>
<sequence>MTKAIRVRYAPSPTGLLHIGNARTALFNYLYARHYGGTFIIRIEDTDRKRHVEDGERSQLENLRWLGIDWDESPETHENYRQSERLDMYQKYVNELLDKGLAYKSYVTEEELAAERERQEAAGETPRYINEYLGMSEEEKAAYIAEREAAGIIPTVRLAVNETGVYKWTDIVKGEIEFEGGNIGGDWVIQKKDGYPTYNFAVVIDDHLMEISHVIRGDDHIANTPKQLMVYEALGWEAPEFGHMTLIINSETGKKLSKRDTNTLQFIEDYRKKGYLPEAVFNFIALLGWNPGGEHEIFSRQELIELFDEKRLSKSPAAFDQKKLDWMNNEYIKNADFDTIFALAKPYLEEAGRLTDKAEKLVELYKPQMKSVDEIVPLTDLFFADFPELTDAEREVMAGETVPTVLTAFKEKLEAMSDADFVTENIFPQIKAVQKETGIKGKNLFMPIRIAVSGEMHGPELPDTIYLLGREKSIQHIENMLNQIQ</sequence>
<keyword id="KW-0030">Aminoacyl-tRNA synthetase</keyword>
<keyword id="KW-0067">ATP-binding</keyword>
<keyword id="KW-0963">Cytoplasm</keyword>
<keyword id="KW-0436">Ligase</keyword>
<keyword id="KW-0547">Nucleotide-binding</keyword>
<keyword id="KW-0648">Protein biosynthesis</keyword>
<keyword id="KW-1185">Reference proteome</keyword>
<accession>A3CQQ6</accession>